<proteinExistence type="predicted"/>
<organism>
    <name type="scientific">Bacillus subtilis (strain 168)</name>
    <dbReference type="NCBI Taxonomy" id="224308"/>
    <lineage>
        <taxon>Bacteria</taxon>
        <taxon>Bacillati</taxon>
        <taxon>Bacillota</taxon>
        <taxon>Bacilli</taxon>
        <taxon>Bacillales</taxon>
        <taxon>Bacillaceae</taxon>
        <taxon>Bacillus</taxon>
    </lineage>
</organism>
<comment type="subcellular location">
    <subcellularLocation>
        <location evidence="2">Membrane</location>
        <topology evidence="2">Single-pass membrane protein</topology>
    </subcellularLocation>
</comment>
<sequence>MTWAIVMLILMSLVKIVLTCLPTGVIEWLLGKFEVHAKLSDENASLSLDGKRLEGAEKQKVIDQFNEAIFLEKYYIYPGDEERYLHPENGGTPLVIDTKKGKKDVKLFVYRYDDHIDVVKQYKKKVIAYRVLSESLQKESLSVAGSLA</sequence>
<keyword id="KW-0472">Membrane</keyword>
<keyword id="KW-1185">Reference proteome</keyword>
<keyword id="KW-0812">Transmembrane</keyword>
<keyword id="KW-1133">Transmembrane helix</keyword>
<reference key="1">
    <citation type="journal article" date="1997" name="Microbiology">
        <title>A 23.4 kb segment at the 69 degrees-70 degrees region of the Bacillus subtilis genome.</title>
        <authorList>
            <person name="Yamamoto H."/>
            <person name="Uchiyama S."/>
            <person name="Nugroho F.A."/>
            <person name="Sekiguchi J."/>
        </authorList>
    </citation>
    <scope>NUCLEOTIDE SEQUENCE [GENOMIC DNA]</scope>
    <source>
        <strain>168 / AC327</strain>
    </source>
</reference>
<reference key="2">
    <citation type="journal article" date="1997" name="Nature">
        <title>The complete genome sequence of the Gram-positive bacterium Bacillus subtilis.</title>
        <authorList>
            <person name="Kunst F."/>
            <person name="Ogasawara N."/>
            <person name="Moszer I."/>
            <person name="Albertini A.M."/>
            <person name="Alloni G."/>
            <person name="Azevedo V."/>
            <person name="Bertero M.G."/>
            <person name="Bessieres P."/>
            <person name="Bolotin A."/>
            <person name="Borchert S."/>
            <person name="Borriss R."/>
            <person name="Boursier L."/>
            <person name="Brans A."/>
            <person name="Braun M."/>
            <person name="Brignell S.C."/>
            <person name="Bron S."/>
            <person name="Brouillet S."/>
            <person name="Bruschi C.V."/>
            <person name="Caldwell B."/>
            <person name="Capuano V."/>
            <person name="Carter N.M."/>
            <person name="Choi S.-K."/>
            <person name="Codani J.-J."/>
            <person name="Connerton I.F."/>
            <person name="Cummings N.J."/>
            <person name="Daniel R.A."/>
            <person name="Denizot F."/>
            <person name="Devine K.M."/>
            <person name="Duesterhoeft A."/>
            <person name="Ehrlich S.D."/>
            <person name="Emmerson P.T."/>
            <person name="Entian K.-D."/>
            <person name="Errington J."/>
            <person name="Fabret C."/>
            <person name="Ferrari E."/>
            <person name="Foulger D."/>
            <person name="Fritz C."/>
            <person name="Fujita M."/>
            <person name="Fujita Y."/>
            <person name="Fuma S."/>
            <person name="Galizzi A."/>
            <person name="Galleron N."/>
            <person name="Ghim S.-Y."/>
            <person name="Glaser P."/>
            <person name="Goffeau A."/>
            <person name="Golightly E.J."/>
            <person name="Grandi G."/>
            <person name="Guiseppi G."/>
            <person name="Guy B.J."/>
            <person name="Haga K."/>
            <person name="Haiech J."/>
            <person name="Harwood C.R."/>
            <person name="Henaut A."/>
            <person name="Hilbert H."/>
            <person name="Holsappel S."/>
            <person name="Hosono S."/>
            <person name="Hullo M.-F."/>
            <person name="Itaya M."/>
            <person name="Jones L.-M."/>
            <person name="Joris B."/>
            <person name="Karamata D."/>
            <person name="Kasahara Y."/>
            <person name="Klaerr-Blanchard M."/>
            <person name="Klein C."/>
            <person name="Kobayashi Y."/>
            <person name="Koetter P."/>
            <person name="Koningstein G."/>
            <person name="Krogh S."/>
            <person name="Kumano M."/>
            <person name="Kurita K."/>
            <person name="Lapidus A."/>
            <person name="Lardinois S."/>
            <person name="Lauber J."/>
            <person name="Lazarevic V."/>
            <person name="Lee S.-M."/>
            <person name="Levine A."/>
            <person name="Liu H."/>
            <person name="Masuda S."/>
            <person name="Mauel C."/>
            <person name="Medigue C."/>
            <person name="Medina N."/>
            <person name="Mellado R.P."/>
            <person name="Mizuno M."/>
            <person name="Moestl D."/>
            <person name="Nakai S."/>
            <person name="Noback M."/>
            <person name="Noone D."/>
            <person name="O'Reilly M."/>
            <person name="Ogawa K."/>
            <person name="Ogiwara A."/>
            <person name="Oudega B."/>
            <person name="Park S.-H."/>
            <person name="Parro V."/>
            <person name="Pohl T.M."/>
            <person name="Portetelle D."/>
            <person name="Porwollik S."/>
            <person name="Prescott A.M."/>
            <person name="Presecan E."/>
            <person name="Pujic P."/>
            <person name="Purnelle B."/>
            <person name="Rapoport G."/>
            <person name="Rey M."/>
            <person name="Reynolds S."/>
            <person name="Rieger M."/>
            <person name="Rivolta C."/>
            <person name="Rocha E."/>
            <person name="Roche B."/>
            <person name="Rose M."/>
            <person name="Sadaie Y."/>
            <person name="Sato T."/>
            <person name="Scanlan E."/>
            <person name="Schleich S."/>
            <person name="Schroeter R."/>
            <person name="Scoffone F."/>
            <person name="Sekiguchi J."/>
            <person name="Sekowska A."/>
            <person name="Seror S.J."/>
            <person name="Serror P."/>
            <person name="Shin B.-S."/>
            <person name="Soldo B."/>
            <person name="Sorokin A."/>
            <person name="Tacconi E."/>
            <person name="Takagi T."/>
            <person name="Takahashi H."/>
            <person name="Takemaru K."/>
            <person name="Takeuchi M."/>
            <person name="Tamakoshi A."/>
            <person name="Tanaka T."/>
            <person name="Terpstra P."/>
            <person name="Tognoni A."/>
            <person name="Tosato V."/>
            <person name="Uchiyama S."/>
            <person name="Vandenbol M."/>
            <person name="Vannier F."/>
            <person name="Vassarotti A."/>
            <person name="Viari A."/>
            <person name="Wambutt R."/>
            <person name="Wedler E."/>
            <person name="Wedler H."/>
            <person name="Weitzenegger T."/>
            <person name="Winters P."/>
            <person name="Wipat A."/>
            <person name="Yamamoto H."/>
            <person name="Yamane K."/>
            <person name="Yasumoto K."/>
            <person name="Yata K."/>
            <person name="Yoshida K."/>
            <person name="Yoshikawa H.-F."/>
            <person name="Zumstein E."/>
            <person name="Yoshikawa H."/>
            <person name="Danchin A."/>
        </authorList>
    </citation>
    <scope>NUCLEOTIDE SEQUENCE [LARGE SCALE GENOMIC DNA]</scope>
    <source>
        <strain>168</strain>
    </source>
</reference>
<gene>
    <name type="primary">yfmQ</name>
    <name type="ordered locus">BSU07380</name>
</gene>
<protein>
    <recommendedName>
        <fullName>Uncharacterized protein YfmQ</fullName>
    </recommendedName>
</protein>
<feature type="chain" id="PRO_0000049541" description="Uncharacterized protein YfmQ">
    <location>
        <begin position="1"/>
        <end position="148"/>
    </location>
</feature>
<feature type="transmembrane region" description="Helical" evidence="1">
    <location>
        <begin position="7"/>
        <end position="29"/>
    </location>
</feature>
<accession>O06475</accession>
<dbReference type="EMBL" id="D86418">
    <property type="protein sequence ID" value="BAA20106.1"/>
    <property type="molecule type" value="Genomic_DNA"/>
</dbReference>
<dbReference type="EMBL" id="AL009126">
    <property type="protein sequence ID" value="CAB12557.1"/>
    <property type="molecule type" value="Genomic_DNA"/>
</dbReference>
<dbReference type="PIR" id="H69813">
    <property type="entry name" value="H69813"/>
</dbReference>
<dbReference type="RefSeq" id="NP_388619.1">
    <property type="nucleotide sequence ID" value="NC_000964.3"/>
</dbReference>
<dbReference type="RefSeq" id="WP_003243426.1">
    <property type="nucleotide sequence ID" value="NZ_OZ025638.1"/>
</dbReference>
<dbReference type="FunCoup" id="O06475">
    <property type="interactions" value="9"/>
</dbReference>
<dbReference type="STRING" id="224308.BSU07380"/>
<dbReference type="PaxDb" id="224308-BSU07380"/>
<dbReference type="DNASU" id="938786"/>
<dbReference type="EnsemblBacteria" id="CAB12557">
    <property type="protein sequence ID" value="CAB12557"/>
    <property type="gene ID" value="BSU_07380"/>
</dbReference>
<dbReference type="GeneID" id="938786"/>
<dbReference type="KEGG" id="bsu:BSU07380"/>
<dbReference type="PATRIC" id="fig|224308.179.peg.800"/>
<dbReference type="eggNOG" id="ENOG5032NCS">
    <property type="taxonomic scope" value="Bacteria"/>
</dbReference>
<dbReference type="InParanoid" id="O06475"/>
<dbReference type="OrthoDB" id="2718899at2"/>
<dbReference type="BioCyc" id="BSUB:BSU07380-MONOMER"/>
<dbReference type="Proteomes" id="UP000001570">
    <property type="component" value="Chromosome"/>
</dbReference>
<dbReference type="GO" id="GO:0016020">
    <property type="term" value="C:membrane"/>
    <property type="evidence" value="ECO:0007669"/>
    <property type="project" value="UniProtKB-SubCell"/>
</dbReference>
<dbReference type="InterPro" id="IPR019723">
    <property type="entry name" value="Uncharacterised_YfmQ"/>
</dbReference>
<dbReference type="Pfam" id="PF10787">
    <property type="entry name" value="YfmQ"/>
    <property type="match status" value="1"/>
</dbReference>
<name>YFMQ_BACSU</name>
<evidence type="ECO:0000255" key="1"/>
<evidence type="ECO:0000305" key="2"/>